<name>TRMB_STRPG</name>
<protein>
    <recommendedName>
        <fullName evidence="2">tRNA (guanine-N(7)-)-methyltransferase</fullName>
        <ecNumber evidence="2">2.1.1.33</ecNumber>
    </recommendedName>
    <alternativeName>
        <fullName evidence="2">tRNA (guanine(46)-N(7))-methyltransferase</fullName>
    </alternativeName>
    <alternativeName>
        <fullName evidence="2">tRNA(m7G46)-methyltransferase</fullName>
    </alternativeName>
</protein>
<gene>
    <name evidence="2" type="primary">trmB</name>
    <name type="ordered locus">SpyM50377</name>
</gene>
<sequence length="211" mass="24455">MRVRKRKGAEEHLANNPHYVILNPEDAKGRWHDVFGNDRPIHIEVGSGKGGFITGMALKNPDINYIGIDIQLSVLSYALDKVLASEVPNVKLLRVDGSSLTNYFEDGEVDMMYLNFSDPWPKTKHEKRRLTYKDFLDTYKRILPEHGEIHFKTDNRGLFEYSLASFSQYGMTLRQIWLDLHASNYEGNVMTEYEEKFSNKGQVIYRVEANF</sequence>
<evidence type="ECO:0000250" key="1"/>
<evidence type="ECO:0000255" key="2">
    <source>
        <dbReference type="HAMAP-Rule" id="MF_01057"/>
    </source>
</evidence>
<reference key="1">
    <citation type="journal article" date="2007" name="J. Bacteriol.">
        <title>Complete genome of acute rheumatic fever-associated serotype M5 Streptococcus pyogenes strain Manfredo.</title>
        <authorList>
            <person name="Holden M.T.G."/>
            <person name="Scott A."/>
            <person name="Cherevach I."/>
            <person name="Chillingworth T."/>
            <person name="Churcher C."/>
            <person name="Cronin A."/>
            <person name="Dowd L."/>
            <person name="Feltwell T."/>
            <person name="Hamlin N."/>
            <person name="Holroyd S."/>
            <person name="Jagels K."/>
            <person name="Moule S."/>
            <person name="Mungall K."/>
            <person name="Quail M.A."/>
            <person name="Price C."/>
            <person name="Rabbinowitsch E."/>
            <person name="Sharp S."/>
            <person name="Skelton J."/>
            <person name="Whitehead S."/>
            <person name="Barrell B.G."/>
            <person name="Kehoe M."/>
            <person name="Parkhill J."/>
        </authorList>
    </citation>
    <scope>NUCLEOTIDE SEQUENCE [LARGE SCALE GENOMIC DNA]</scope>
    <source>
        <strain>Manfredo</strain>
    </source>
</reference>
<proteinExistence type="inferred from homology"/>
<dbReference type="EC" id="2.1.1.33" evidence="2"/>
<dbReference type="EMBL" id="AM295007">
    <property type="protein sequence ID" value="CAM29719.1"/>
    <property type="molecule type" value="Genomic_DNA"/>
</dbReference>
<dbReference type="RefSeq" id="WP_002983387.1">
    <property type="nucleotide sequence ID" value="NC_009332.1"/>
</dbReference>
<dbReference type="SMR" id="A2RCZ6"/>
<dbReference type="GeneID" id="69900424"/>
<dbReference type="KEGG" id="spf:SpyM50377"/>
<dbReference type="HOGENOM" id="CLU_050910_2_1_9"/>
<dbReference type="UniPathway" id="UPA00989"/>
<dbReference type="GO" id="GO:0043527">
    <property type="term" value="C:tRNA methyltransferase complex"/>
    <property type="evidence" value="ECO:0007669"/>
    <property type="project" value="TreeGrafter"/>
</dbReference>
<dbReference type="GO" id="GO:0008176">
    <property type="term" value="F:tRNA (guanine(46)-N7)-methyltransferase activity"/>
    <property type="evidence" value="ECO:0007669"/>
    <property type="project" value="UniProtKB-UniRule"/>
</dbReference>
<dbReference type="CDD" id="cd02440">
    <property type="entry name" value="AdoMet_MTases"/>
    <property type="match status" value="1"/>
</dbReference>
<dbReference type="FunFam" id="3.40.50.150:FF:000035">
    <property type="entry name" value="tRNA (guanine-N(7)-)-methyltransferase"/>
    <property type="match status" value="1"/>
</dbReference>
<dbReference type="Gene3D" id="3.40.50.150">
    <property type="entry name" value="Vaccinia Virus protein VP39"/>
    <property type="match status" value="1"/>
</dbReference>
<dbReference type="HAMAP" id="MF_01057">
    <property type="entry name" value="tRNA_methyltr_TrmB"/>
    <property type="match status" value="1"/>
</dbReference>
<dbReference type="InterPro" id="IPR029063">
    <property type="entry name" value="SAM-dependent_MTases_sf"/>
</dbReference>
<dbReference type="InterPro" id="IPR003358">
    <property type="entry name" value="tRNA_(Gua-N-7)_MeTrfase_Trmb"/>
</dbReference>
<dbReference type="InterPro" id="IPR055361">
    <property type="entry name" value="tRNA_methyltr_TrmB_bact"/>
</dbReference>
<dbReference type="NCBIfam" id="NF001080">
    <property type="entry name" value="PRK00121.2-2"/>
    <property type="match status" value="1"/>
</dbReference>
<dbReference type="NCBIfam" id="TIGR00091">
    <property type="entry name" value="tRNA (guanosine(46)-N7)-methyltransferase TrmB"/>
    <property type="match status" value="1"/>
</dbReference>
<dbReference type="PANTHER" id="PTHR23417">
    <property type="entry name" value="3-DEOXY-D-MANNO-OCTULOSONIC-ACID TRANSFERASE/TRNA GUANINE-N 7 - -METHYLTRANSFERASE"/>
    <property type="match status" value="1"/>
</dbReference>
<dbReference type="PANTHER" id="PTHR23417:SF14">
    <property type="entry name" value="PENTACOTRIPEPTIDE-REPEAT REGION OF PRORP DOMAIN-CONTAINING PROTEIN"/>
    <property type="match status" value="1"/>
</dbReference>
<dbReference type="Pfam" id="PF02390">
    <property type="entry name" value="Methyltransf_4"/>
    <property type="match status" value="1"/>
</dbReference>
<dbReference type="SUPFAM" id="SSF53335">
    <property type="entry name" value="S-adenosyl-L-methionine-dependent methyltransferases"/>
    <property type="match status" value="1"/>
</dbReference>
<dbReference type="PROSITE" id="PS51625">
    <property type="entry name" value="SAM_MT_TRMB"/>
    <property type="match status" value="1"/>
</dbReference>
<feature type="chain" id="PRO_0000288239" description="tRNA (guanine-N(7)-)-methyltransferase">
    <location>
        <begin position="1"/>
        <end position="211"/>
    </location>
</feature>
<feature type="region of interest" description="Interaction with RNA" evidence="2">
    <location>
        <begin position="124"/>
        <end position="129"/>
    </location>
</feature>
<feature type="active site" evidence="1">
    <location>
        <position position="118"/>
    </location>
</feature>
<feature type="binding site" evidence="2">
    <location>
        <position position="44"/>
    </location>
    <ligand>
        <name>S-adenosyl-L-methionine</name>
        <dbReference type="ChEBI" id="CHEBI:59789"/>
    </ligand>
</feature>
<feature type="binding site" evidence="2">
    <location>
        <position position="69"/>
    </location>
    <ligand>
        <name>S-adenosyl-L-methionine</name>
        <dbReference type="ChEBI" id="CHEBI:59789"/>
    </ligand>
</feature>
<feature type="binding site" evidence="2">
    <location>
        <position position="96"/>
    </location>
    <ligand>
        <name>S-adenosyl-L-methionine</name>
        <dbReference type="ChEBI" id="CHEBI:59789"/>
    </ligand>
</feature>
<feature type="binding site" evidence="2">
    <location>
        <position position="118"/>
    </location>
    <ligand>
        <name>S-adenosyl-L-methionine</name>
        <dbReference type="ChEBI" id="CHEBI:59789"/>
    </ligand>
</feature>
<feature type="binding site" evidence="2">
    <location>
        <position position="122"/>
    </location>
    <ligand>
        <name>substrate</name>
    </ligand>
</feature>
<feature type="binding site" evidence="2">
    <location>
        <position position="154"/>
    </location>
    <ligand>
        <name>substrate</name>
    </ligand>
</feature>
<feature type="binding site" evidence="2">
    <location>
        <begin position="191"/>
        <end position="194"/>
    </location>
    <ligand>
        <name>substrate</name>
    </ligand>
</feature>
<accession>A2RCZ6</accession>
<keyword id="KW-0489">Methyltransferase</keyword>
<keyword id="KW-0949">S-adenosyl-L-methionine</keyword>
<keyword id="KW-0808">Transferase</keyword>
<keyword id="KW-0819">tRNA processing</keyword>
<comment type="function">
    <text evidence="2">Catalyzes the formation of N(7)-methylguanine at position 46 (m7G46) in tRNA.</text>
</comment>
<comment type="catalytic activity">
    <reaction evidence="2">
        <text>guanosine(46) in tRNA + S-adenosyl-L-methionine = N(7)-methylguanosine(46) in tRNA + S-adenosyl-L-homocysteine</text>
        <dbReference type="Rhea" id="RHEA:42708"/>
        <dbReference type="Rhea" id="RHEA-COMP:10188"/>
        <dbReference type="Rhea" id="RHEA-COMP:10189"/>
        <dbReference type="ChEBI" id="CHEBI:57856"/>
        <dbReference type="ChEBI" id="CHEBI:59789"/>
        <dbReference type="ChEBI" id="CHEBI:74269"/>
        <dbReference type="ChEBI" id="CHEBI:74480"/>
        <dbReference type="EC" id="2.1.1.33"/>
    </reaction>
</comment>
<comment type="pathway">
    <text evidence="2">tRNA modification; N(7)-methylguanine-tRNA biosynthesis.</text>
</comment>
<comment type="similarity">
    <text evidence="2">Belongs to the class I-like SAM-binding methyltransferase superfamily. TrmB family.</text>
</comment>
<organism>
    <name type="scientific">Streptococcus pyogenes serotype M5 (strain Manfredo)</name>
    <dbReference type="NCBI Taxonomy" id="160491"/>
    <lineage>
        <taxon>Bacteria</taxon>
        <taxon>Bacillati</taxon>
        <taxon>Bacillota</taxon>
        <taxon>Bacilli</taxon>
        <taxon>Lactobacillales</taxon>
        <taxon>Streptococcaceae</taxon>
        <taxon>Streptococcus</taxon>
    </lineage>
</organism>